<proteinExistence type="inferred from homology"/>
<sequence length="1368" mass="153357">MQYSFTEKKRIRKSFAKRPIVHQVPFLLATQLESFSTFLQADVLAAQRKPEGLQAAFTSVFPIVSHNGFARLEFVSYALSAPAFNIKECQQRGLTYCSALRAKVRLVILDKESPNKPVVKEVKEQEVYMGEMPLMTPTGSFVINGTERVIVSQLHRSPGVFFEHDKGKTHSSGKLLFSARIIPYRGSWLDFEFDPKDILYFRVDRRRKMPVTILLKAIGLTPEQILANFFVFDNFTLMDEGAQLEFVPERLRGEVARFDITDRDGKVIVQKDKRINAKHIRDLEAAKTKFISVPEDYLLGRVLAKNVVDGDTGEVIASANDEVTESVLEKLREAGIKDIQTLYTNDLDQGPYISSTLRVDETTDRTAARIAIYRMMRPGEPPTEEAVEALFNRLFYSEEAYDLSKVGRMKFNRRVSRDEITGPMTLQDDDILATIKILVELRNGKGEVDDIDHLGNRRVRCVGELAENQFRAGLVRVERAVKERLGQAESENLMPHDLINSKPISSAIREFFGSSQLSQFMDQTNPLSEITHKRRVSALGPGGLTRERAGFEVRDVHPTHYGRVCPIETPEGPNIGLINSLALYAHLNEYGFLETPYRKVVDSKVTDQIDYLSAIEEGRYMIAQANAAIDENGQLIDELVSSREAGETMMVTPDRIQYMDVAPSQIVSVAASLIPFLEHDDANRALMGSNMQRQAVPCLRPEKPVVGTGIERTCAVDSGTTVQAFRGGVVDYVDAGRIVIRVNDDEAVAGEVGVDIYNLIKYTRSNQNTNINQRPIVKMGDKVSRGDVLADGASTDLGELALGQNMLIAFMPWNGYNFEDSILISEKVVADDRYTSIHIEELNVVARDTKLGPEEITRDISNLAEVQLGRLDESGIVYIGAEVEAGDVLVGKVTPKGETQLTPEEKLLRAIFGEKASDVKDTSLRVPSGMSGTVIDVQVFTREGIQRDKRAQQIIDDELKRYRLDLNDQLRIVEGDAFQRLARMLVGKVANGGPKKLAKGTKIDQAYLEDLDHYHWFDIRLADDEAAAQLEAIKNSIEEKRHQFDLAFEEKRKKLTQGDELPPGVLKMVKVYLAVKRRLQPGDKMAGRHGNKGVVSKIVPIEDMPYMADGRPADVVLNPLGVPSRMNVGQVLEVHLGWAAKGLGWRIGEMLQRQAKIEEMRVFLTKIYNDSGRQEDLESFTDEEILELAKNLREGVPFATPVFDGATEEEMGKMLDLAFPDDIAEQLGMNPSKNQVRLYDGRTGEMFERRVTLGYMHYLKLHHLVDDKMHARSTGPYSLVTQQPLGGKAQFGGQRFGEMEVWALEAYGASYVLQEMLTVKSDDVNGRTKVYENLVKGDHVIDAGMPESFNVLVKEIRSLGIDIDLDRN</sequence>
<comment type="function">
    <text evidence="1">DNA-dependent RNA polymerase catalyzes the transcription of DNA into RNA using the four ribonucleoside triphosphates as substrates.</text>
</comment>
<comment type="catalytic activity">
    <reaction evidence="1">
        <text>RNA(n) + a ribonucleoside 5'-triphosphate = RNA(n+1) + diphosphate</text>
        <dbReference type="Rhea" id="RHEA:21248"/>
        <dbReference type="Rhea" id="RHEA-COMP:14527"/>
        <dbReference type="Rhea" id="RHEA-COMP:17342"/>
        <dbReference type="ChEBI" id="CHEBI:33019"/>
        <dbReference type="ChEBI" id="CHEBI:61557"/>
        <dbReference type="ChEBI" id="CHEBI:140395"/>
        <dbReference type="EC" id="2.7.7.6"/>
    </reaction>
</comment>
<comment type="subunit">
    <text evidence="1">The RNAP catalytic core consists of 2 alpha, 1 beta, 1 beta' and 1 omega subunit. When a sigma factor is associated with the core the holoenzyme is formed, which can initiate transcription.</text>
</comment>
<comment type="similarity">
    <text evidence="1">Belongs to the RNA polymerase beta chain family.</text>
</comment>
<gene>
    <name evidence="1" type="primary">rpoB</name>
    <name type="ordered locus">Bcep18194_A3439</name>
</gene>
<organism>
    <name type="scientific">Burkholderia lata (strain ATCC 17760 / DSM 23089 / LMG 22485 / NCIMB 9086 / R18194 / 383)</name>
    <dbReference type="NCBI Taxonomy" id="482957"/>
    <lineage>
        <taxon>Bacteria</taxon>
        <taxon>Pseudomonadati</taxon>
        <taxon>Pseudomonadota</taxon>
        <taxon>Betaproteobacteria</taxon>
        <taxon>Burkholderiales</taxon>
        <taxon>Burkholderiaceae</taxon>
        <taxon>Burkholderia</taxon>
        <taxon>Burkholderia cepacia complex</taxon>
    </lineage>
</organism>
<dbReference type="EC" id="2.7.7.6" evidence="1"/>
<dbReference type="EMBL" id="CP000151">
    <property type="protein sequence ID" value="ABB07041.1"/>
    <property type="molecule type" value="Genomic_DNA"/>
</dbReference>
<dbReference type="RefSeq" id="WP_011350670.1">
    <property type="nucleotide sequence ID" value="NZ_CADFCT010000011.1"/>
</dbReference>
<dbReference type="SMR" id="Q39KH5"/>
<dbReference type="GeneID" id="45093356"/>
<dbReference type="KEGG" id="bur:Bcep18194_A3439"/>
<dbReference type="PATRIC" id="fig|482957.22.peg.279"/>
<dbReference type="HOGENOM" id="CLU_000524_4_0_4"/>
<dbReference type="Proteomes" id="UP000002705">
    <property type="component" value="Chromosome 1"/>
</dbReference>
<dbReference type="GO" id="GO:0000428">
    <property type="term" value="C:DNA-directed RNA polymerase complex"/>
    <property type="evidence" value="ECO:0007669"/>
    <property type="project" value="UniProtKB-KW"/>
</dbReference>
<dbReference type="GO" id="GO:0003677">
    <property type="term" value="F:DNA binding"/>
    <property type="evidence" value="ECO:0007669"/>
    <property type="project" value="UniProtKB-UniRule"/>
</dbReference>
<dbReference type="GO" id="GO:0003899">
    <property type="term" value="F:DNA-directed RNA polymerase activity"/>
    <property type="evidence" value="ECO:0007669"/>
    <property type="project" value="UniProtKB-UniRule"/>
</dbReference>
<dbReference type="GO" id="GO:0032549">
    <property type="term" value="F:ribonucleoside binding"/>
    <property type="evidence" value="ECO:0007669"/>
    <property type="project" value="InterPro"/>
</dbReference>
<dbReference type="GO" id="GO:0006351">
    <property type="term" value="P:DNA-templated transcription"/>
    <property type="evidence" value="ECO:0007669"/>
    <property type="project" value="UniProtKB-UniRule"/>
</dbReference>
<dbReference type="CDD" id="cd00653">
    <property type="entry name" value="RNA_pol_B_RPB2"/>
    <property type="match status" value="1"/>
</dbReference>
<dbReference type="FunFam" id="2.40.50.100:FF:000006">
    <property type="entry name" value="DNA-directed RNA polymerase subunit beta"/>
    <property type="match status" value="1"/>
</dbReference>
<dbReference type="FunFam" id="2.40.50.150:FF:000001">
    <property type="entry name" value="DNA-directed RNA polymerase subunit beta"/>
    <property type="match status" value="1"/>
</dbReference>
<dbReference type="FunFam" id="3.90.1110.10:FF:000004">
    <property type="entry name" value="DNA-directed RNA polymerase subunit beta"/>
    <property type="match status" value="1"/>
</dbReference>
<dbReference type="FunFam" id="3.90.1800.10:FF:000001">
    <property type="entry name" value="DNA-directed RNA polymerase subunit beta"/>
    <property type="match status" value="1"/>
</dbReference>
<dbReference type="Gene3D" id="2.40.50.100">
    <property type="match status" value="1"/>
</dbReference>
<dbReference type="Gene3D" id="2.40.50.150">
    <property type="match status" value="1"/>
</dbReference>
<dbReference type="Gene3D" id="3.90.1100.10">
    <property type="match status" value="2"/>
</dbReference>
<dbReference type="Gene3D" id="2.30.150.10">
    <property type="entry name" value="DNA-directed RNA polymerase, beta subunit, external 1 domain"/>
    <property type="match status" value="1"/>
</dbReference>
<dbReference type="Gene3D" id="2.40.270.10">
    <property type="entry name" value="DNA-directed RNA polymerase, subunit 2, domain 6"/>
    <property type="match status" value="1"/>
</dbReference>
<dbReference type="Gene3D" id="3.90.1800.10">
    <property type="entry name" value="RNA polymerase alpha subunit dimerisation domain"/>
    <property type="match status" value="1"/>
</dbReference>
<dbReference type="Gene3D" id="3.90.1110.10">
    <property type="entry name" value="RNA polymerase Rpb2, domain 2"/>
    <property type="match status" value="1"/>
</dbReference>
<dbReference type="HAMAP" id="MF_01321">
    <property type="entry name" value="RNApol_bact_RpoB"/>
    <property type="match status" value="1"/>
</dbReference>
<dbReference type="InterPro" id="IPR042107">
    <property type="entry name" value="DNA-dir_RNA_pol_bsu_ext_1_sf"/>
</dbReference>
<dbReference type="InterPro" id="IPR019462">
    <property type="entry name" value="DNA-dir_RNA_pol_bsu_external_1"/>
</dbReference>
<dbReference type="InterPro" id="IPR015712">
    <property type="entry name" value="DNA-dir_RNA_pol_su2"/>
</dbReference>
<dbReference type="InterPro" id="IPR007120">
    <property type="entry name" value="DNA-dir_RNAP_su2_dom"/>
</dbReference>
<dbReference type="InterPro" id="IPR037033">
    <property type="entry name" value="DNA-dir_RNAP_su2_hyb_sf"/>
</dbReference>
<dbReference type="InterPro" id="IPR010243">
    <property type="entry name" value="RNA_pol_bsu_bac"/>
</dbReference>
<dbReference type="InterPro" id="IPR007121">
    <property type="entry name" value="RNA_pol_bsu_CS"/>
</dbReference>
<dbReference type="InterPro" id="IPR007644">
    <property type="entry name" value="RNA_pol_bsu_protrusion"/>
</dbReference>
<dbReference type="InterPro" id="IPR007642">
    <property type="entry name" value="RNA_pol_Rpb2_2"/>
</dbReference>
<dbReference type="InterPro" id="IPR037034">
    <property type="entry name" value="RNA_pol_Rpb2_2_sf"/>
</dbReference>
<dbReference type="InterPro" id="IPR007645">
    <property type="entry name" value="RNA_pol_Rpb2_3"/>
</dbReference>
<dbReference type="InterPro" id="IPR007641">
    <property type="entry name" value="RNA_pol_Rpb2_7"/>
</dbReference>
<dbReference type="InterPro" id="IPR014724">
    <property type="entry name" value="RNA_pol_RPB2_OB-fold"/>
</dbReference>
<dbReference type="NCBIfam" id="NF001616">
    <property type="entry name" value="PRK00405.1"/>
    <property type="match status" value="1"/>
</dbReference>
<dbReference type="NCBIfam" id="TIGR02013">
    <property type="entry name" value="rpoB"/>
    <property type="match status" value="1"/>
</dbReference>
<dbReference type="PANTHER" id="PTHR20856">
    <property type="entry name" value="DNA-DIRECTED RNA POLYMERASE I SUBUNIT 2"/>
    <property type="match status" value="1"/>
</dbReference>
<dbReference type="Pfam" id="PF04563">
    <property type="entry name" value="RNA_pol_Rpb2_1"/>
    <property type="match status" value="1"/>
</dbReference>
<dbReference type="Pfam" id="PF04561">
    <property type="entry name" value="RNA_pol_Rpb2_2"/>
    <property type="match status" value="2"/>
</dbReference>
<dbReference type="Pfam" id="PF04565">
    <property type="entry name" value="RNA_pol_Rpb2_3"/>
    <property type="match status" value="1"/>
</dbReference>
<dbReference type="Pfam" id="PF10385">
    <property type="entry name" value="RNA_pol_Rpb2_45"/>
    <property type="match status" value="1"/>
</dbReference>
<dbReference type="Pfam" id="PF00562">
    <property type="entry name" value="RNA_pol_Rpb2_6"/>
    <property type="match status" value="1"/>
</dbReference>
<dbReference type="Pfam" id="PF04560">
    <property type="entry name" value="RNA_pol_Rpb2_7"/>
    <property type="match status" value="1"/>
</dbReference>
<dbReference type="SUPFAM" id="SSF64484">
    <property type="entry name" value="beta and beta-prime subunits of DNA dependent RNA-polymerase"/>
    <property type="match status" value="1"/>
</dbReference>
<dbReference type="PROSITE" id="PS01166">
    <property type="entry name" value="RNA_POL_BETA"/>
    <property type="match status" value="1"/>
</dbReference>
<keyword id="KW-0240">DNA-directed RNA polymerase</keyword>
<keyword id="KW-0548">Nucleotidyltransferase</keyword>
<keyword id="KW-0804">Transcription</keyword>
<keyword id="KW-0808">Transferase</keyword>
<feature type="chain" id="PRO_0000224040" description="DNA-directed RNA polymerase subunit beta">
    <location>
        <begin position="1"/>
        <end position="1368"/>
    </location>
</feature>
<name>RPOB_BURL3</name>
<protein>
    <recommendedName>
        <fullName evidence="1">DNA-directed RNA polymerase subunit beta</fullName>
        <shortName evidence="1">RNAP subunit beta</shortName>
        <ecNumber evidence="1">2.7.7.6</ecNumber>
    </recommendedName>
    <alternativeName>
        <fullName evidence="1">RNA polymerase subunit beta</fullName>
    </alternativeName>
    <alternativeName>
        <fullName evidence="1">Transcriptase subunit beta</fullName>
    </alternativeName>
</protein>
<evidence type="ECO:0000255" key="1">
    <source>
        <dbReference type="HAMAP-Rule" id="MF_01321"/>
    </source>
</evidence>
<reference key="1">
    <citation type="submission" date="2005-10" db="EMBL/GenBank/DDBJ databases">
        <title>Complete sequence of chromosome 1 of Burkholderia sp. 383.</title>
        <authorList>
            <consortium name="US DOE Joint Genome Institute"/>
            <person name="Copeland A."/>
            <person name="Lucas S."/>
            <person name="Lapidus A."/>
            <person name="Barry K."/>
            <person name="Detter J.C."/>
            <person name="Glavina T."/>
            <person name="Hammon N."/>
            <person name="Israni S."/>
            <person name="Pitluck S."/>
            <person name="Chain P."/>
            <person name="Malfatti S."/>
            <person name="Shin M."/>
            <person name="Vergez L."/>
            <person name="Schmutz J."/>
            <person name="Larimer F."/>
            <person name="Land M."/>
            <person name="Kyrpides N."/>
            <person name="Lykidis A."/>
            <person name="Richardson P."/>
        </authorList>
    </citation>
    <scope>NUCLEOTIDE SEQUENCE [LARGE SCALE GENOMIC DNA]</scope>
    <source>
        <strain>ATCC 17760 / DSM 23089 / LMG 22485 / NCIMB 9086 / R18194 / 383</strain>
    </source>
</reference>
<accession>Q39KH5</accession>